<protein>
    <recommendedName>
        <fullName evidence="1">Tyrosine--tRNA ligase</fullName>
        <ecNumber evidence="1">6.1.1.1</ecNumber>
    </recommendedName>
    <alternativeName>
        <fullName evidence="1">Tyrosyl-tRNA synthetase</fullName>
        <shortName evidence="1">TyrRS</shortName>
    </alternativeName>
</protein>
<gene>
    <name evidence="1" type="primary">tyrS</name>
    <name type="ordered locus">EcE24377A_1847</name>
</gene>
<feature type="chain" id="PRO_1000088585" description="Tyrosine--tRNA ligase">
    <location>
        <begin position="1"/>
        <end position="424"/>
    </location>
</feature>
<feature type="domain" description="S4 RNA-binding" evidence="1">
    <location>
        <begin position="357"/>
        <end position="414"/>
    </location>
</feature>
<feature type="short sequence motif" description="'HIGH' region">
    <location>
        <begin position="42"/>
        <end position="51"/>
    </location>
</feature>
<feature type="short sequence motif" description="'KMSKS' region">
    <location>
        <begin position="235"/>
        <end position="239"/>
    </location>
</feature>
<feature type="binding site" evidence="1">
    <location>
        <position position="37"/>
    </location>
    <ligand>
        <name>L-tyrosine</name>
        <dbReference type="ChEBI" id="CHEBI:58315"/>
    </ligand>
</feature>
<feature type="binding site" evidence="1">
    <location>
        <position position="175"/>
    </location>
    <ligand>
        <name>L-tyrosine</name>
        <dbReference type="ChEBI" id="CHEBI:58315"/>
    </ligand>
</feature>
<feature type="binding site" evidence="1">
    <location>
        <position position="179"/>
    </location>
    <ligand>
        <name>L-tyrosine</name>
        <dbReference type="ChEBI" id="CHEBI:58315"/>
    </ligand>
</feature>
<feature type="binding site" evidence="1">
    <location>
        <position position="238"/>
    </location>
    <ligand>
        <name>ATP</name>
        <dbReference type="ChEBI" id="CHEBI:30616"/>
    </ligand>
</feature>
<feature type="modified residue" description="N6-acetyllysine" evidence="1">
    <location>
        <position position="144"/>
    </location>
</feature>
<accession>A7ZM99</accession>
<proteinExistence type="inferred from homology"/>
<dbReference type="EC" id="6.1.1.1" evidence="1"/>
<dbReference type="EMBL" id="CP000800">
    <property type="protein sequence ID" value="ABV19220.1"/>
    <property type="molecule type" value="Genomic_DNA"/>
</dbReference>
<dbReference type="RefSeq" id="WP_001295400.1">
    <property type="nucleotide sequence ID" value="NC_009801.1"/>
</dbReference>
<dbReference type="SMR" id="A7ZM99"/>
<dbReference type="GeneID" id="93775791"/>
<dbReference type="KEGG" id="ecw:EcE24377A_1847"/>
<dbReference type="HOGENOM" id="CLU_024003_0_3_6"/>
<dbReference type="Proteomes" id="UP000001122">
    <property type="component" value="Chromosome"/>
</dbReference>
<dbReference type="GO" id="GO:0005829">
    <property type="term" value="C:cytosol"/>
    <property type="evidence" value="ECO:0007669"/>
    <property type="project" value="TreeGrafter"/>
</dbReference>
<dbReference type="GO" id="GO:0005524">
    <property type="term" value="F:ATP binding"/>
    <property type="evidence" value="ECO:0007669"/>
    <property type="project" value="UniProtKB-UniRule"/>
</dbReference>
<dbReference type="GO" id="GO:0003723">
    <property type="term" value="F:RNA binding"/>
    <property type="evidence" value="ECO:0007669"/>
    <property type="project" value="UniProtKB-KW"/>
</dbReference>
<dbReference type="GO" id="GO:0004831">
    <property type="term" value="F:tyrosine-tRNA ligase activity"/>
    <property type="evidence" value="ECO:0007669"/>
    <property type="project" value="UniProtKB-UniRule"/>
</dbReference>
<dbReference type="GO" id="GO:0006437">
    <property type="term" value="P:tyrosyl-tRNA aminoacylation"/>
    <property type="evidence" value="ECO:0007669"/>
    <property type="project" value="UniProtKB-UniRule"/>
</dbReference>
<dbReference type="CDD" id="cd00165">
    <property type="entry name" value="S4"/>
    <property type="match status" value="1"/>
</dbReference>
<dbReference type="CDD" id="cd00805">
    <property type="entry name" value="TyrRS_core"/>
    <property type="match status" value="1"/>
</dbReference>
<dbReference type="FunFam" id="1.10.240.10:FF:000001">
    <property type="entry name" value="Tyrosine--tRNA ligase"/>
    <property type="match status" value="1"/>
</dbReference>
<dbReference type="FunFam" id="3.10.290.10:FF:000007">
    <property type="entry name" value="Tyrosine--tRNA ligase"/>
    <property type="match status" value="1"/>
</dbReference>
<dbReference type="FunFam" id="3.40.50.620:FF:000008">
    <property type="entry name" value="Tyrosine--tRNA ligase"/>
    <property type="match status" value="1"/>
</dbReference>
<dbReference type="Gene3D" id="3.40.50.620">
    <property type="entry name" value="HUPs"/>
    <property type="match status" value="1"/>
</dbReference>
<dbReference type="Gene3D" id="3.10.290.10">
    <property type="entry name" value="RNA-binding S4 domain"/>
    <property type="match status" value="1"/>
</dbReference>
<dbReference type="Gene3D" id="1.10.240.10">
    <property type="entry name" value="Tyrosyl-Transfer RNA Synthetase"/>
    <property type="match status" value="1"/>
</dbReference>
<dbReference type="HAMAP" id="MF_02006">
    <property type="entry name" value="Tyr_tRNA_synth_type1"/>
    <property type="match status" value="1"/>
</dbReference>
<dbReference type="InterPro" id="IPR001412">
    <property type="entry name" value="aa-tRNA-synth_I_CS"/>
</dbReference>
<dbReference type="InterPro" id="IPR002305">
    <property type="entry name" value="aa-tRNA-synth_Ic"/>
</dbReference>
<dbReference type="InterPro" id="IPR014729">
    <property type="entry name" value="Rossmann-like_a/b/a_fold"/>
</dbReference>
<dbReference type="InterPro" id="IPR002942">
    <property type="entry name" value="S4_RNA-bd"/>
</dbReference>
<dbReference type="InterPro" id="IPR036986">
    <property type="entry name" value="S4_RNA-bd_sf"/>
</dbReference>
<dbReference type="InterPro" id="IPR054608">
    <property type="entry name" value="SYY-like_C"/>
</dbReference>
<dbReference type="InterPro" id="IPR002307">
    <property type="entry name" value="Tyr-tRNA-ligase"/>
</dbReference>
<dbReference type="InterPro" id="IPR024088">
    <property type="entry name" value="Tyr-tRNA-ligase_bac-type"/>
</dbReference>
<dbReference type="InterPro" id="IPR024107">
    <property type="entry name" value="Tyr-tRNA-ligase_bac_1"/>
</dbReference>
<dbReference type="NCBIfam" id="TIGR00234">
    <property type="entry name" value="tyrS"/>
    <property type="match status" value="1"/>
</dbReference>
<dbReference type="PANTHER" id="PTHR11766:SF0">
    <property type="entry name" value="TYROSINE--TRNA LIGASE, MITOCHONDRIAL"/>
    <property type="match status" value="1"/>
</dbReference>
<dbReference type="PANTHER" id="PTHR11766">
    <property type="entry name" value="TYROSYL-TRNA SYNTHETASE"/>
    <property type="match status" value="1"/>
</dbReference>
<dbReference type="Pfam" id="PF22421">
    <property type="entry name" value="SYY_C-terminal"/>
    <property type="match status" value="1"/>
</dbReference>
<dbReference type="Pfam" id="PF00579">
    <property type="entry name" value="tRNA-synt_1b"/>
    <property type="match status" value="1"/>
</dbReference>
<dbReference type="PRINTS" id="PR01040">
    <property type="entry name" value="TRNASYNTHTYR"/>
</dbReference>
<dbReference type="SMART" id="SM00363">
    <property type="entry name" value="S4"/>
    <property type="match status" value="1"/>
</dbReference>
<dbReference type="SUPFAM" id="SSF55174">
    <property type="entry name" value="Alpha-L RNA-binding motif"/>
    <property type="match status" value="1"/>
</dbReference>
<dbReference type="SUPFAM" id="SSF52374">
    <property type="entry name" value="Nucleotidylyl transferase"/>
    <property type="match status" value="1"/>
</dbReference>
<dbReference type="PROSITE" id="PS00178">
    <property type="entry name" value="AA_TRNA_LIGASE_I"/>
    <property type="match status" value="1"/>
</dbReference>
<dbReference type="PROSITE" id="PS50889">
    <property type="entry name" value="S4"/>
    <property type="match status" value="1"/>
</dbReference>
<sequence length="424" mass="47527">MASSNLIKQLQERGLVAQVTDEEALAERLAQGPIALYCGFDPTADSLHLGHLVPLLCLKRFQQAGHKPVALVGGATGLIGDPSFKAAERKLNTEETVQEWVDKIRKQVAPFLDFDCGENSAIAANNYDWFGNMNVLTFLRDIGKHFSVNQMINKEAVKQRLNREDQGISFTEFSYNLLQGYDFACLNKQYGVVLQIGGSDQWGNITSGIDLTRRLHQNQVFGLTVPLITKADGTKFGKTEGGAVWLDPKKTSPYKFYQFWINTADADVYRFLKFFTFMSIEEINALEEEDKNSGKAPRAQYVLAEQVTRLVHGEEGLQAAKRITECLFSGSLSALSEADFEQLAQDGVPMVEMEKGADLMQALVDSELQPSRGQARKTIASNAITINGEKQSDPEYFFKEEDRLFGRFTLLRRGKKNYCLICWK</sequence>
<reference key="1">
    <citation type="journal article" date="2008" name="J. Bacteriol.">
        <title>The pangenome structure of Escherichia coli: comparative genomic analysis of E. coli commensal and pathogenic isolates.</title>
        <authorList>
            <person name="Rasko D.A."/>
            <person name="Rosovitz M.J."/>
            <person name="Myers G.S.A."/>
            <person name="Mongodin E.F."/>
            <person name="Fricke W.F."/>
            <person name="Gajer P."/>
            <person name="Crabtree J."/>
            <person name="Sebaihia M."/>
            <person name="Thomson N.R."/>
            <person name="Chaudhuri R."/>
            <person name="Henderson I.R."/>
            <person name="Sperandio V."/>
            <person name="Ravel J."/>
        </authorList>
    </citation>
    <scope>NUCLEOTIDE SEQUENCE [LARGE SCALE GENOMIC DNA]</scope>
    <source>
        <strain>E24377A / ETEC</strain>
    </source>
</reference>
<keyword id="KW-0007">Acetylation</keyword>
<keyword id="KW-0030">Aminoacyl-tRNA synthetase</keyword>
<keyword id="KW-0067">ATP-binding</keyword>
<keyword id="KW-0963">Cytoplasm</keyword>
<keyword id="KW-0436">Ligase</keyword>
<keyword id="KW-0547">Nucleotide-binding</keyword>
<keyword id="KW-0648">Protein biosynthesis</keyword>
<keyword id="KW-1185">Reference proteome</keyword>
<keyword id="KW-0694">RNA-binding</keyword>
<name>SYY_ECO24</name>
<organism>
    <name type="scientific">Escherichia coli O139:H28 (strain E24377A / ETEC)</name>
    <dbReference type="NCBI Taxonomy" id="331111"/>
    <lineage>
        <taxon>Bacteria</taxon>
        <taxon>Pseudomonadati</taxon>
        <taxon>Pseudomonadota</taxon>
        <taxon>Gammaproteobacteria</taxon>
        <taxon>Enterobacterales</taxon>
        <taxon>Enterobacteriaceae</taxon>
        <taxon>Escherichia</taxon>
    </lineage>
</organism>
<comment type="function">
    <text evidence="1">Catalyzes the attachment of tyrosine to tRNA(Tyr) in a two-step reaction: tyrosine is first activated by ATP to form Tyr-AMP and then transferred to the acceptor end of tRNA(Tyr).</text>
</comment>
<comment type="catalytic activity">
    <reaction evidence="1">
        <text>tRNA(Tyr) + L-tyrosine + ATP = L-tyrosyl-tRNA(Tyr) + AMP + diphosphate + H(+)</text>
        <dbReference type="Rhea" id="RHEA:10220"/>
        <dbReference type="Rhea" id="RHEA-COMP:9706"/>
        <dbReference type="Rhea" id="RHEA-COMP:9707"/>
        <dbReference type="ChEBI" id="CHEBI:15378"/>
        <dbReference type="ChEBI" id="CHEBI:30616"/>
        <dbReference type="ChEBI" id="CHEBI:33019"/>
        <dbReference type="ChEBI" id="CHEBI:58315"/>
        <dbReference type="ChEBI" id="CHEBI:78442"/>
        <dbReference type="ChEBI" id="CHEBI:78536"/>
        <dbReference type="ChEBI" id="CHEBI:456215"/>
        <dbReference type="EC" id="6.1.1.1"/>
    </reaction>
</comment>
<comment type="subunit">
    <text evidence="1">Homodimer.</text>
</comment>
<comment type="subcellular location">
    <subcellularLocation>
        <location evidence="1">Cytoplasm</location>
    </subcellularLocation>
</comment>
<comment type="similarity">
    <text evidence="1">Belongs to the class-I aminoacyl-tRNA synthetase family. TyrS type 1 subfamily.</text>
</comment>
<evidence type="ECO:0000255" key="1">
    <source>
        <dbReference type="HAMAP-Rule" id="MF_02006"/>
    </source>
</evidence>